<accession>Q43316</accession>
<accession>Q8LBT0</accession>
<proteinExistence type="evidence at protein level"/>
<dbReference type="EC" id="2.5.1.61" evidence="6"/>
<dbReference type="EMBL" id="X73839">
    <property type="protein sequence ID" value="CAA52061.1"/>
    <property type="molecule type" value="Genomic_DNA"/>
</dbReference>
<dbReference type="EMBL" id="X73535">
    <property type="protein sequence ID" value="CAA51941.1"/>
    <property type="molecule type" value="Genomic_DNA"/>
</dbReference>
<dbReference type="EMBL" id="AL392174">
    <property type="protein sequence ID" value="CAC08328.1"/>
    <property type="molecule type" value="Genomic_DNA"/>
</dbReference>
<dbReference type="EMBL" id="CP002688">
    <property type="protein sequence ID" value="AED91277.1"/>
    <property type="molecule type" value="Genomic_DNA"/>
</dbReference>
<dbReference type="EMBL" id="AF419614">
    <property type="protein sequence ID" value="AAL31946.1"/>
    <property type="molecule type" value="mRNA"/>
</dbReference>
<dbReference type="EMBL" id="AY070431">
    <property type="protein sequence ID" value="AAL49926.1"/>
    <property type="molecule type" value="mRNA"/>
</dbReference>
<dbReference type="EMBL" id="AY123037">
    <property type="protein sequence ID" value="AAM67570.1"/>
    <property type="molecule type" value="mRNA"/>
</dbReference>
<dbReference type="EMBL" id="AY087012">
    <property type="protein sequence ID" value="AAM64573.1"/>
    <property type="molecule type" value="mRNA"/>
</dbReference>
<dbReference type="PIR" id="S50762">
    <property type="entry name" value="S50762"/>
</dbReference>
<dbReference type="RefSeq" id="NP_196445.1">
    <property type="nucleotide sequence ID" value="NM_120911.4"/>
</dbReference>
<dbReference type="PDB" id="4HTG">
    <property type="method" value="X-ray"/>
    <property type="resolution" value="1.45 A"/>
    <property type="chains" value="A=63-382"/>
</dbReference>
<dbReference type="PDBsum" id="4HTG"/>
<dbReference type="SMR" id="Q43316"/>
<dbReference type="BioGRID" id="16002">
    <property type="interactions" value="4"/>
</dbReference>
<dbReference type="FunCoup" id="Q43316">
    <property type="interactions" value="2723"/>
</dbReference>
<dbReference type="IntAct" id="Q43316">
    <property type="interactions" value="1"/>
</dbReference>
<dbReference type="STRING" id="3702.Q43316"/>
<dbReference type="iPTMnet" id="Q43316"/>
<dbReference type="MetOSite" id="Q43316"/>
<dbReference type="PaxDb" id="3702-AT5G08280.1"/>
<dbReference type="ProteomicsDB" id="232214"/>
<dbReference type="EnsemblPlants" id="AT5G08280.1">
    <property type="protein sequence ID" value="AT5G08280.1"/>
    <property type="gene ID" value="AT5G08280"/>
</dbReference>
<dbReference type="GeneID" id="830724"/>
<dbReference type="Gramene" id="AT5G08280.1">
    <property type="protein sequence ID" value="AT5G08280.1"/>
    <property type="gene ID" value="AT5G08280"/>
</dbReference>
<dbReference type="KEGG" id="ath:AT5G08280"/>
<dbReference type="Araport" id="AT5G08280"/>
<dbReference type="TAIR" id="AT5G08280">
    <property type="gene designation" value="HEMC"/>
</dbReference>
<dbReference type="eggNOG" id="KOG2892">
    <property type="taxonomic scope" value="Eukaryota"/>
</dbReference>
<dbReference type="HOGENOM" id="CLU_019704_1_2_1"/>
<dbReference type="InParanoid" id="Q43316"/>
<dbReference type="OMA" id="GHRITHR"/>
<dbReference type="OrthoDB" id="564646at2759"/>
<dbReference type="PhylomeDB" id="Q43316"/>
<dbReference type="BioCyc" id="ARA:AT5G08280-MONOMER"/>
<dbReference type="BioCyc" id="MetaCyc:AT5G08280-MONOMER"/>
<dbReference type="BRENDA" id="2.5.1.61">
    <property type="organism ID" value="399"/>
</dbReference>
<dbReference type="UniPathway" id="UPA00251">
    <property type="reaction ID" value="UER00319"/>
</dbReference>
<dbReference type="UniPathway" id="UPA00668"/>
<dbReference type="CD-CODE" id="4299E36E">
    <property type="entry name" value="Nucleolus"/>
</dbReference>
<dbReference type="EvolutionaryTrace" id="Q43316"/>
<dbReference type="PRO" id="PR:Q43316"/>
<dbReference type="Proteomes" id="UP000006548">
    <property type="component" value="Chromosome 5"/>
</dbReference>
<dbReference type="ExpressionAtlas" id="Q43316">
    <property type="expression patterns" value="baseline and differential"/>
</dbReference>
<dbReference type="GO" id="GO:0048046">
    <property type="term" value="C:apoplast"/>
    <property type="evidence" value="ECO:0007005"/>
    <property type="project" value="TAIR"/>
</dbReference>
<dbReference type="GO" id="GO:0009507">
    <property type="term" value="C:chloroplast"/>
    <property type="evidence" value="ECO:0007005"/>
    <property type="project" value="TAIR"/>
</dbReference>
<dbReference type="GO" id="GO:0009941">
    <property type="term" value="C:chloroplast envelope"/>
    <property type="evidence" value="ECO:0007005"/>
    <property type="project" value="TAIR"/>
</dbReference>
<dbReference type="GO" id="GO:0009570">
    <property type="term" value="C:chloroplast stroma"/>
    <property type="evidence" value="ECO:0007005"/>
    <property type="project" value="TAIR"/>
</dbReference>
<dbReference type="GO" id="GO:0005886">
    <property type="term" value="C:plasma membrane"/>
    <property type="evidence" value="ECO:0007005"/>
    <property type="project" value="TAIR"/>
</dbReference>
<dbReference type="GO" id="GO:0004418">
    <property type="term" value="F:hydroxymethylbilane synthase activity"/>
    <property type="evidence" value="ECO:0000314"/>
    <property type="project" value="TAIR"/>
</dbReference>
<dbReference type="GO" id="GO:0015995">
    <property type="term" value="P:chlorophyll biosynthetic process"/>
    <property type="evidence" value="ECO:0000304"/>
    <property type="project" value="TAIR"/>
</dbReference>
<dbReference type="GO" id="GO:1900865">
    <property type="term" value="P:chloroplast RNA modification"/>
    <property type="evidence" value="ECO:0000315"/>
    <property type="project" value="TAIR"/>
</dbReference>
<dbReference type="GO" id="GO:0006782">
    <property type="term" value="P:protoporphyrinogen IX biosynthetic process"/>
    <property type="evidence" value="ECO:0007669"/>
    <property type="project" value="UniProtKB-UniPathway"/>
</dbReference>
<dbReference type="CDD" id="cd13648">
    <property type="entry name" value="PBP2_PBGD_1"/>
    <property type="match status" value="1"/>
</dbReference>
<dbReference type="FunFam" id="3.30.160.40:FF:000001">
    <property type="entry name" value="Porphobilinogen deaminase"/>
    <property type="match status" value="1"/>
</dbReference>
<dbReference type="FunFam" id="3.40.190.10:FF:000004">
    <property type="entry name" value="Porphobilinogen deaminase"/>
    <property type="match status" value="1"/>
</dbReference>
<dbReference type="FunFam" id="3.40.190.10:FF:000101">
    <property type="entry name" value="Porphobilinogen deaminase, chloroplastic"/>
    <property type="match status" value="1"/>
</dbReference>
<dbReference type="Gene3D" id="3.40.190.10">
    <property type="entry name" value="Periplasmic binding protein-like II"/>
    <property type="match status" value="2"/>
</dbReference>
<dbReference type="Gene3D" id="3.30.160.40">
    <property type="entry name" value="Porphobilinogen deaminase, C-terminal domain"/>
    <property type="match status" value="1"/>
</dbReference>
<dbReference type="HAMAP" id="MF_00260">
    <property type="entry name" value="Porphobil_deam"/>
    <property type="match status" value="1"/>
</dbReference>
<dbReference type="InterPro" id="IPR000860">
    <property type="entry name" value="HemC"/>
</dbReference>
<dbReference type="InterPro" id="IPR022419">
    <property type="entry name" value="Porphobilin_deaminase_cofac_BS"/>
</dbReference>
<dbReference type="InterPro" id="IPR022417">
    <property type="entry name" value="Porphobilin_deaminase_N"/>
</dbReference>
<dbReference type="InterPro" id="IPR022418">
    <property type="entry name" value="Porphobilinogen_deaminase_C"/>
</dbReference>
<dbReference type="InterPro" id="IPR036803">
    <property type="entry name" value="Porphobilinogen_deaminase_C_sf"/>
</dbReference>
<dbReference type="NCBIfam" id="TIGR00212">
    <property type="entry name" value="hemC"/>
    <property type="match status" value="1"/>
</dbReference>
<dbReference type="PANTHER" id="PTHR11557">
    <property type="entry name" value="PORPHOBILINOGEN DEAMINASE"/>
    <property type="match status" value="1"/>
</dbReference>
<dbReference type="PANTHER" id="PTHR11557:SF0">
    <property type="entry name" value="PORPHOBILINOGEN DEAMINASE"/>
    <property type="match status" value="1"/>
</dbReference>
<dbReference type="Pfam" id="PF01379">
    <property type="entry name" value="Porphobil_deam"/>
    <property type="match status" value="1"/>
</dbReference>
<dbReference type="Pfam" id="PF03900">
    <property type="entry name" value="Porphobil_deamC"/>
    <property type="match status" value="1"/>
</dbReference>
<dbReference type="PRINTS" id="PR00151">
    <property type="entry name" value="PORPHBDMNASE"/>
</dbReference>
<dbReference type="SUPFAM" id="SSF53850">
    <property type="entry name" value="Periplasmic binding protein-like II"/>
    <property type="match status" value="1"/>
</dbReference>
<dbReference type="SUPFAM" id="SSF54782">
    <property type="entry name" value="Porphobilinogen deaminase (hydroxymethylbilane synthase), C-terminal domain"/>
    <property type="match status" value="1"/>
</dbReference>
<dbReference type="PROSITE" id="PS00533">
    <property type="entry name" value="PORPHOBILINOGEN_DEAM"/>
    <property type="match status" value="1"/>
</dbReference>
<feature type="transit peptide" description="Chloroplast" evidence="3">
    <location>
        <begin position="1"/>
        <end position="62"/>
    </location>
</feature>
<feature type="chain" id="PRO_0000013322" description="Porphobilinogen deaminase, chloroplastic">
    <location>
        <begin position="63"/>
        <end position="382"/>
    </location>
</feature>
<feature type="active site" description="Proton donor/acceptor" evidence="2">
    <location>
        <position position="157"/>
    </location>
</feature>
<feature type="binding site" evidence="5 7">
    <location>
        <position position="80"/>
    </location>
    <ligand>
        <name>dipyrromethane</name>
        <dbReference type="ChEBI" id="CHEBI:60342"/>
    </ligand>
</feature>
<feature type="binding site" evidence="5 7">
    <location>
        <position position="82"/>
    </location>
    <ligand>
        <name>dipyrromethane</name>
        <dbReference type="ChEBI" id="CHEBI:60342"/>
    </ligand>
</feature>
<feature type="binding site" evidence="5 7">
    <location>
        <begin position="156"/>
        <end position="157"/>
    </location>
    <ligand>
        <name>dipyrromethane</name>
        <dbReference type="ChEBI" id="CHEBI:60342"/>
    </ligand>
</feature>
<feature type="binding site" evidence="5 7">
    <location>
        <begin position="200"/>
        <end position="206"/>
    </location>
    <ligand>
        <name>dipyrromethane</name>
        <dbReference type="ChEBI" id="CHEBI:60342"/>
    </ligand>
</feature>
<feature type="binding site" evidence="5 7">
    <location>
        <begin position="223"/>
        <end position="229"/>
    </location>
    <ligand>
        <name>dipyrromethane</name>
        <dbReference type="ChEBI" id="CHEBI:60342"/>
    </ligand>
</feature>
<feature type="modified residue" description="Phosphoserine" evidence="8">
    <location>
        <position position="123"/>
    </location>
</feature>
<feature type="modified residue" description="S-(dipyrrolylmethanemethyl)cysteine" evidence="5 7">
    <location>
        <position position="316"/>
    </location>
</feature>
<feature type="mutagenesis site" description="In rug1; reduced growth and necrotic leaf lesions." evidence="1">
    <original>A</original>
    <variation>V</variation>
    <location>
        <position position="246"/>
    </location>
</feature>
<feature type="sequence conflict" description="In Ref. 5; AAM64573." evidence="4" ref="5">
    <original>D</original>
    <variation>Y</variation>
    <location>
        <position position="157"/>
    </location>
</feature>
<feature type="strand" evidence="9">
    <location>
        <begin position="74"/>
        <end position="79"/>
    </location>
</feature>
<feature type="helix" evidence="9">
    <location>
        <begin position="83"/>
        <end position="99"/>
    </location>
</feature>
<feature type="helix" evidence="9">
    <location>
        <begin position="101"/>
        <end position="103"/>
    </location>
</feature>
<feature type="strand" evidence="9">
    <location>
        <begin position="108"/>
        <end position="113"/>
    </location>
</feature>
<feature type="helix" evidence="9">
    <location>
        <begin position="117"/>
        <end position="119"/>
    </location>
</feature>
<feature type="helix" evidence="9">
    <location>
        <begin position="126"/>
        <end position="128"/>
    </location>
</feature>
<feature type="turn" evidence="9">
    <location>
        <begin position="134"/>
        <end position="136"/>
    </location>
</feature>
<feature type="helix" evidence="9">
    <location>
        <begin position="137"/>
        <end position="144"/>
    </location>
</feature>
<feature type="strand" evidence="9">
    <location>
        <begin position="149"/>
        <end position="154"/>
    </location>
</feature>
<feature type="helix" evidence="9">
    <location>
        <begin position="155"/>
        <end position="157"/>
    </location>
</feature>
<feature type="strand" evidence="9">
    <location>
        <begin position="166"/>
        <end position="171"/>
    </location>
</feature>
<feature type="strand" evidence="9">
    <location>
        <begin position="179"/>
        <end position="185"/>
    </location>
</feature>
<feature type="helix" evidence="9">
    <location>
        <begin position="189"/>
        <end position="191"/>
    </location>
</feature>
<feature type="strand" evidence="9">
    <location>
        <begin position="197"/>
        <end position="199"/>
    </location>
</feature>
<feature type="helix" evidence="9">
    <location>
        <begin position="203"/>
        <end position="212"/>
    </location>
</feature>
<feature type="strand" evidence="9">
    <location>
        <begin position="216"/>
        <end position="219"/>
    </location>
</feature>
<feature type="helix" evidence="9">
    <location>
        <begin position="226"/>
        <end position="234"/>
    </location>
</feature>
<feature type="strand" evidence="9">
    <location>
        <begin position="237"/>
        <end position="244"/>
    </location>
</feature>
<feature type="helix" evidence="9">
    <location>
        <begin position="245"/>
        <end position="251"/>
    </location>
</feature>
<feature type="helix" evidence="9">
    <location>
        <begin position="254"/>
        <end position="256"/>
    </location>
</feature>
<feature type="strand" evidence="9">
    <location>
        <begin position="258"/>
        <end position="260"/>
    </location>
</feature>
<feature type="turn" evidence="9">
    <location>
        <begin position="263"/>
        <end position="265"/>
    </location>
</feature>
<feature type="turn" evidence="9">
    <location>
        <begin position="270"/>
        <end position="273"/>
    </location>
</feature>
<feature type="strand" evidence="9">
    <location>
        <begin position="275"/>
        <end position="280"/>
    </location>
</feature>
<feature type="helix" evidence="9">
    <location>
        <begin position="284"/>
        <end position="291"/>
    </location>
</feature>
<feature type="helix" evidence="9">
    <location>
        <begin position="296"/>
        <end position="311"/>
    </location>
</feature>
<feature type="strand" evidence="9">
    <location>
        <begin position="318"/>
        <end position="326"/>
    </location>
</feature>
<feature type="strand" evidence="9">
    <location>
        <begin position="330"/>
        <end position="339"/>
    </location>
</feature>
<feature type="strand" evidence="9">
    <location>
        <begin position="346"/>
        <end position="355"/>
    </location>
</feature>
<feature type="helix" evidence="9">
    <location>
        <begin position="357"/>
        <end position="372"/>
    </location>
</feature>
<evidence type="ECO:0000269" key="1">
    <source>
    </source>
</evidence>
<evidence type="ECO:0000269" key="2">
    <source>
    </source>
</evidence>
<evidence type="ECO:0000269" key="3">
    <source>
    </source>
</evidence>
<evidence type="ECO:0000305" key="4"/>
<evidence type="ECO:0000305" key="5">
    <source>
    </source>
</evidence>
<evidence type="ECO:0000305" key="6">
    <source>
    </source>
</evidence>
<evidence type="ECO:0007744" key="7">
    <source>
        <dbReference type="PDB" id="4HTG"/>
    </source>
</evidence>
<evidence type="ECO:0007744" key="8">
    <source>
    </source>
</evidence>
<evidence type="ECO:0007829" key="9">
    <source>
        <dbReference type="PDB" id="4HTG"/>
    </source>
</evidence>
<gene>
    <name type="primary">HEMC</name>
    <name type="synonym">RUG1</name>
    <name type="ordered locus">At5g08280</name>
    <name type="ORF">F8L15_10</name>
</gene>
<reference key="1">
    <citation type="journal article" date="1994" name="Plant Mol. Biol.">
        <title>Porphobilinogen deaminase is encoded by a single gene in Arabidopsis thaliana and is targeted to the chloroplasts.</title>
        <authorList>
            <person name="Lim S.H."/>
            <person name="Witty M."/>
            <person name="Wallace-Cook A.D.M."/>
            <person name="Ilag L.I."/>
            <person name="Smith A.G."/>
        </authorList>
    </citation>
    <scope>NUCLEOTIDE SEQUENCE [GENOMIC DNA]</scope>
    <source>
        <strain>cv. Landsberg erecta</strain>
    </source>
</reference>
<reference key="2">
    <citation type="journal article" date="2000" name="Nature">
        <title>Sequence and analysis of chromosome 5 of the plant Arabidopsis thaliana.</title>
        <authorList>
            <person name="Tabata S."/>
            <person name="Kaneko T."/>
            <person name="Nakamura Y."/>
            <person name="Kotani H."/>
            <person name="Kato T."/>
            <person name="Asamizu E."/>
            <person name="Miyajima N."/>
            <person name="Sasamoto S."/>
            <person name="Kimura T."/>
            <person name="Hosouchi T."/>
            <person name="Kawashima K."/>
            <person name="Kohara M."/>
            <person name="Matsumoto M."/>
            <person name="Matsuno A."/>
            <person name="Muraki A."/>
            <person name="Nakayama S."/>
            <person name="Nakazaki N."/>
            <person name="Naruo K."/>
            <person name="Okumura S."/>
            <person name="Shinpo S."/>
            <person name="Takeuchi C."/>
            <person name="Wada T."/>
            <person name="Watanabe A."/>
            <person name="Yamada M."/>
            <person name="Yasuda M."/>
            <person name="Sato S."/>
            <person name="de la Bastide M."/>
            <person name="Huang E."/>
            <person name="Spiegel L."/>
            <person name="Gnoj L."/>
            <person name="O'Shaughnessy A."/>
            <person name="Preston R."/>
            <person name="Habermann K."/>
            <person name="Murray J."/>
            <person name="Johnson D."/>
            <person name="Rohlfing T."/>
            <person name="Nelson J."/>
            <person name="Stoneking T."/>
            <person name="Pepin K."/>
            <person name="Spieth J."/>
            <person name="Sekhon M."/>
            <person name="Armstrong J."/>
            <person name="Becker M."/>
            <person name="Belter E."/>
            <person name="Cordum H."/>
            <person name="Cordes M."/>
            <person name="Courtney L."/>
            <person name="Courtney W."/>
            <person name="Dante M."/>
            <person name="Du H."/>
            <person name="Edwards J."/>
            <person name="Fryman J."/>
            <person name="Haakensen B."/>
            <person name="Lamar E."/>
            <person name="Latreille P."/>
            <person name="Leonard S."/>
            <person name="Meyer R."/>
            <person name="Mulvaney E."/>
            <person name="Ozersky P."/>
            <person name="Riley A."/>
            <person name="Strowmatt C."/>
            <person name="Wagner-McPherson C."/>
            <person name="Wollam A."/>
            <person name="Yoakum M."/>
            <person name="Bell M."/>
            <person name="Dedhia N."/>
            <person name="Parnell L."/>
            <person name="Shah R."/>
            <person name="Rodriguez M."/>
            <person name="Hoon See L."/>
            <person name="Vil D."/>
            <person name="Baker J."/>
            <person name="Kirchoff K."/>
            <person name="Toth K."/>
            <person name="King L."/>
            <person name="Bahret A."/>
            <person name="Miller B."/>
            <person name="Marra M.A."/>
            <person name="Martienssen R."/>
            <person name="McCombie W.R."/>
            <person name="Wilson R.K."/>
            <person name="Murphy G."/>
            <person name="Bancroft I."/>
            <person name="Volckaert G."/>
            <person name="Wambutt R."/>
            <person name="Duesterhoeft A."/>
            <person name="Stiekema W."/>
            <person name="Pohl T."/>
            <person name="Entian K.-D."/>
            <person name="Terryn N."/>
            <person name="Hartley N."/>
            <person name="Bent E."/>
            <person name="Johnson S."/>
            <person name="Langham S.-A."/>
            <person name="McCullagh B."/>
            <person name="Robben J."/>
            <person name="Grymonprez B."/>
            <person name="Zimmermann W."/>
            <person name="Ramsperger U."/>
            <person name="Wedler H."/>
            <person name="Balke K."/>
            <person name="Wedler E."/>
            <person name="Peters S."/>
            <person name="van Staveren M."/>
            <person name="Dirkse W."/>
            <person name="Mooijman P."/>
            <person name="Klein Lankhorst R."/>
            <person name="Weitzenegger T."/>
            <person name="Bothe G."/>
            <person name="Rose M."/>
            <person name="Hauf J."/>
            <person name="Berneiser S."/>
            <person name="Hempel S."/>
            <person name="Feldpausch M."/>
            <person name="Lamberth S."/>
            <person name="Villarroel R."/>
            <person name="Gielen J."/>
            <person name="Ardiles W."/>
            <person name="Bents O."/>
            <person name="Lemcke K."/>
            <person name="Kolesov G."/>
            <person name="Mayer K.F.X."/>
            <person name="Rudd S."/>
            <person name="Schoof H."/>
            <person name="Schueller C."/>
            <person name="Zaccaria P."/>
            <person name="Mewes H.-W."/>
            <person name="Bevan M."/>
            <person name="Fransz P.F."/>
        </authorList>
    </citation>
    <scope>NUCLEOTIDE SEQUENCE [LARGE SCALE GENOMIC DNA]</scope>
    <source>
        <strain>cv. Columbia</strain>
    </source>
</reference>
<reference key="3">
    <citation type="journal article" date="2017" name="Plant J.">
        <title>Araport11: a complete reannotation of the Arabidopsis thaliana reference genome.</title>
        <authorList>
            <person name="Cheng C.Y."/>
            <person name="Krishnakumar V."/>
            <person name="Chan A.P."/>
            <person name="Thibaud-Nissen F."/>
            <person name="Schobel S."/>
            <person name="Town C.D."/>
        </authorList>
    </citation>
    <scope>GENOME REANNOTATION</scope>
    <source>
        <strain>cv. Columbia</strain>
    </source>
</reference>
<reference key="4">
    <citation type="journal article" date="2003" name="Science">
        <title>Empirical analysis of transcriptional activity in the Arabidopsis genome.</title>
        <authorList>
            <person name="Yamada K."/>
            <person name="Lim J."/>
            <person name="Dale J.M."/>
            <person name="Chen H."/>
            <person name="Shinn P."/>
            <person name="Palm C.J."/>
            <person name="Southwick A.M."/>
            <person name="Wu H.C."/>
            <person name="Kim C.J."/>
            <person name="Nguyen M."/>
            <person name="Pham P.K."/>
            <person name="Cheuk R.F."/>
            <person name="Karlin-Newmann G."/>
            <person name="Liu S.X."/>
            <person name="Lam B."/>
            <person name="Sakano H."/>
            <person name="Wu T."/>
            <person name="Yu G."/>
            <person name="Miranda M."/>
            <person name="Quach H.L."/>
            <person name="Tripp M."/>
            <person name="Chang C.H."/>
            <person name="Lee J.M."/>
            <person name="Toriumi M.J."/>
            <person name="Chan M.M."/>
            <person name="Tang C.C."/>
            <person name="Onodera C.S."/>
            <person name="Deng J.M."/>
            <person name="Akiyama K."/>
            <person name="Ansari Y."/>
            <person name="Arakawa T."/>
            <person name="Banh J."/>
            <person name="Banno F."/>
            <person name="Bowser L."/>
            <person name="Brooks S.Y."/>
            <person name="Carninci P."/>
            <person name="Chao Q."/>
            <person name="Choy N."/>
            <person name="Enju A."/>
            <person name="Goldsmith A.D."/>
            <person name="Gurjal M."/>
            <person name="Hansen N.F."/>
            <person name="Hayashizaki Y."/>
            <person name="Johnson-Hopson C."/>
            <person name="Hsuan V.W."/>
            <person name="Iida K."/>
            <person name="Karnes M."/>
            <person name="Khan S."/>
            <person name="Koesema E."/>
            <person name="Ishida J."/>
            <person name="Jiang P.X."/>
            <person name="Jones T."/>
            <person name="Kawai J."/>
            <person name="Kamiya A."/>
            <person name="Meyers C."/>
            <person name="Nakajima M."/>
            <person name="Narusaka M."/>
            <person name="Seki M."/>
            <person name="Sakurai T."/>
            <person name="Satou M."/>
            <person name="Tamse R."/>
            <person name="Vaysberg M."/>
            <person name="Wallender E.K."/>
            <person name="Wong C."/>
            <person name="Yamamura Y."/>
            <person name="Yuan S."/>
            <person name="Shinozaki K."/>
            <person name="Davis R.W."/>
            <person name="Theologis A."/>
            <person name="Ecker J.R."/>
        </authorList>
    </citation>
    <scope>NUCLEOTIDE SEQUENCE [LARGE SCALE MRNA]</scope>
    <source>
        <strain>cv. Columbia</strain>
    </source>
</reference>
<reference key="5">
    <citation type="submission" date="2002-03" db="EMBL/GenBank/DDBJ databases">
        <title>Full-length cDNA from Arabidopsis thaliana.</title>
        <authorList>
            <person name="Brover V.V."/>
            <person name="Troukhan M.E."/>
            <person name="Alexandrov N.A."/>
            <person name="Lu Y.-P."/>
            <person name="Flavell R.B."/>
            <person name="Feldmann K.A."/>
        </authorList>
    </citation>
    <scope>NUCLEOTIDE SEQUENCE [LARGE SCALE MRNA]</scope>
</reference>
<reference key="6">
    <citation type="journal article" date="1994" name="Biochem. J.">
        <title>Purification and properties of porphobilinogen deaminase from Arabidopsis thaliana.</title>
        <authorList>
            <person name="Jones R.M."/>
            <person name="Jordan P.M."/>
        </authorList>
    </citation>
    <scope>PROTEIN SEQUENCE OF 63-74</scope>
    <scope>FUNCTION</scope>
    <scope>CATALYTIC ACTIVITY</scope>
    <scope>BIOPHYSICOCHEMICAL PROPERTIES</scope>
    <scope>SUBUNIT</scope>
    <scope>COFACTOR</scope>
    <scope>ACTIVITY REGULATION</scope>
    <source>
        <strain>cv. Columbia</strain>
    </source>
</reference>
<reference key="7">
    <citation type="journal article" date="2009" name="Plant Physiol.">
        <title>Large-scale Arabidopsis phosphoproteome profiling reveals novel chloroplast kinase substrates and phosphorylation networks.</title>
        <authorList>
            <person name="Reiland S."/>
            <person name="Messerli G."/>
            <person name="Baerenfaller K."/>
            <person name="Gerrits B."/>
            <person name="Endler A."/>
            <person name="Grossmann J."/>
            <person name="Gruissem W."/>
            <person name="Baginsky S."/>
        </authorList>
    </citation>
    <scope>PHOSPHORYLATION [LARGE SCALE ANALYSIS] AT SER-123</scope>
    <scope>IDENTIFICATION BY MASS SPECTROMETRY [LARGE SCALE ANALYSIS]</scope>
</reference>
<reference key="8">
    <citation type="journal article" date="2013" name="PLoS ONE">
        <title>PORPHOBILINOGEN DEAMINASE deficiency alters vegetative and reproductive development and causes lesions in Arabidopsis.</title>
        <authorList>
            <person name="Quesada V."/>
            <person name="Sarmiento-Manus R."/>
            <person name="Gonzalez-Bayon R."/>
            <person name="Hricova A."/>
            <person name="Ponce M.R."/>
            <person name="Micol J.L."/>
        </authorList>
    </citation>
    <scope>FUNCTION</scope>
    <scope>MUTAGENESIS OF ALA-246</scope>
    <source>
        <strain>cv. Landsberg erecta</strain>
    </source>
</reference>
<reference key="9">
    <citation type="journal article" date="2013" name="Acta Crystallogr. D">
        <title>Insights into the mechanism of pyrrole polymerization catalysed by porphobilinogen deaminase: high-resolution X-ray studies of the Arabidopsis thaliana enzyme.</title>
        <authorList>
            <person name="Roberts A."/>
            <person name="Gill R."/>
            <person name="Hussey R.J."/>
            <person name="Mikolajek H."/>
            <person name="Erskine P.T."/>
            <person name="Cooper J.B."/>
            <person name="Wood S.P."/>
            <person name="Chrystal E.J."/>
            <person name="Shoolingin-Jordan P.M."/>
        </authorList>
    </citation>
    <scope>X-RAY CRYSTALLOGRAPHY (1.45 ANGSTROMS) OF 63-382 IN COMPLEX WITH DIPYRROMETHENONE</scope>
    <scope>ACTIVE SITE</scope>
    <scope>PROSTHETIC GROUP AT CYS-316</scope>
</reference>
<comment type="function">
    <text evidence="1 3">Tetrapolymerization of the monopyrrole PBG into the hydroxymethylbilane pre-uroporphyrinogen in several discrete steps.</text>
</comment>
<comment type="catalytic activity">
    <reaction evidence="6">
        <text>4 porphobilinogen + H2O = hydroxymethylbilane + 4 NH4(+)</text>
        <dbReference type="Rhea" id="RHEA:13185"/>
        <dbReference type="ChEBI" id="CHEBI:15377"/>
        <dbReference type="ChEBI" id="CHEBI:28938"/>
        <dbReference type="ChEBI" id="CHEBI:57845"/>
        <dbReference type="ChEBI" id="CHEBI:58126"/>
        <dbReference type="EC" id="2.5.1.61"/>
    </reaction>
    <physiologicalReaction direction="left-to-right" evidence="6">
        <dbReference type="Rhea" id="RHEA:13186"/>
    </physiologicalReaction>
</comment>
<comment type="cofactor">
    <cofactor evidence="3">
        <name>dipyrromethane</name>
        <dbReference type="ChEBI" id="CHEBI:60342"/>
    </cofactor>
    <text evidence="3">Binds 1 dipyrromethane group covalently.</text>
</comment>
<comment type="activity regulation">
    <text evidence="3">Inhibited by NH(3), heavy-metal ions, hydroxylamine and 2-bromoporphobilinogen. Not inhibited by N-ethylmaleimide.</text>
</comment>
<comment type="biophysicochemical properties">
    <kinetics>
        <KM evidence="3">17 uM for porphobilinogen</KM>
    </kinetics>
    <phDependence>
        <text>Optimum pH is 7.7-8.5.</text>
    </phDependence>
    <temperatureDependence>
        <text>Heat stable and fully active up to 70 degrees Celsius.</text>
    </temperatureDependence>
</comment>
<comment type="pathway">
    <text>Porphyrin-containing compound metabolism; protoporphyrin-IX biosynthesis; coproporphyrinogen-III from 5-aminolevulinate: step 2/4.</text>
</comment>
<comment type="pathway">
    <text>Porphyrin-containing compound metabolism; chlorophyll biosynthesis.</text>
</comment>
<comment type="subunit">
    <text evidence="2 3">Monomer.</text>
</comment>
<comment type="subcellular location">
    <subcellularLocation>
        <location>Plastid</location>
        <location>Chloroplast</location>
    </subcellularLocation>
</comment>
<comment type="miscellaneous">
    <text>The porphobilinogen subunits are added sequentially to the dipyrromethane cofactor that is covalently attached to the enzyme. The last step of the reaction involves the hydrolysis of the bound polypyrrole chain and the release of hydroxymethylbilane.</text>
</comment>
<comment type="similarity">
    <text evidence="4">Belongs to the HMBS family.</text>
</comment>
<name>HEM3_ARATH</name>
<protein>
    <recommendedName>
        <fullName>Porphobilinogen deaminase, chloroplastic</fullName>
        <shortName>PBG</shortName>
        <ecNumber evidence="6">2.5.1.61</ecNumber>
    </recommendedName>
    <alternativeName>
        <fullName>Hydroxymethylbilane synthase</fullName>
        <shortName>HMBS</shortName>
    </alternativeName>
    <alternativeName>
        <fullName>Pre-uroporphyrinogen synthase</fullName>
    </alternativeName>
    <alternativeName>
        <fullName>Protein RUGOSA1</fullName>
    </alternativeName>
</protein>
<sequence>MDIASSSLSQAHKVVLTRQPSSRVNTCSLGSVSAIGFSLPQISSPALGKCRRKQSSSGFVKACVAVEQKTRTAIIRIGTRGSPLALAQAYETREKLKKKHPELVEDGAIHIEIIKTTGDKILSQPLADIGGKGLFTKEIDEALINGHIDIAVHSMKDVPTYLPEKTILPCNLPREDVRDAFICLTAATLAELPAGSVVGTASLRRKSQILHKYPALHVEENFRGNVQTRLSKLQGGKVQATLLALAGLKRLSMTENVASILSLDEMLPAVAQGAIGIACRTDDDKMATYLASLNHEETRLAISCERAFLETLDGSCRTPIAGYASKDEEGNCIFRGLVASPDGTKVLETSRKGPYVYEDMVKMGKDAGQELLSRAGPGFFGN</sequence>
<organism>
    <name type="scientific">Arabidopsis thaliana</name>
    <name type="common">Mouse-ear cress</name>
    <dbReference type="NCBI Taxonomy" id="3702"/>
    <lineage>
        <taxon>Eukaryota</taxon>
        <taxon>Viridiplantae</taxon>
        <taxon>Streptophyta</taxon>
        <taxon>Embryophyta</taxon>
        <taxon>Tracheophyta</taxon>
        <taxon>Spermatophyta</taxon>
        <taxon>Magnoliopsida</taxon>
        <taxon>eudicotyledons</taxon>
        <taxon>Gunneridae</taxon>
        <taxon>Pentapetalae</taxon>
        <taxon>rosids</taxon>
        <taxon>malvids</taxon>
        <taxon>Brassicales</taxon>
        <taxon>Brassicaceae</taxon>
        <taxon>Camelineae</taxon>
        <taxon>Arabidopsis</taxon>
    </lineage>
</organism>
<keyword id="KW-0002">3D-structure</keyword>
<keyword id="KW-0149">Chlorophyll biosynthesis</keyword>
<keyword id="KW-0150">Chloroplast</keyword>
<keyword id="KW-0903">Direct protein sequencing</keyword>
<keyword id="KW-0597">Phosphoprotein</keyword>
<keyword id="KW-0934">Plastid</keyword>
<keyword id="KW-0627">Porphyrin biosynthesis</keyword>
<keyword id="KW-1185">Reference proteome</keyword>
<keyword id="KW-0808">Transferase</keyword>
<keyword id="KW-0809">Transit peptide</keyword>